<organism>
    <name type="scientific">Strongylocentrotus purpuratus</name>
    <name type="common">Purple sea urchin</name>
    <dbReference type="NCBI Taxonomy" id="7668"/>
    <lineage>
        <taxon>Eukaryota</taxon>
        <taxon>Metazoa</taxon>
        <taxon>Echinodermata</taxon>
        <taxon>Eleutherozoa</taxon>
        <taxon>Echinozoa</taxon>
        <taxon>Echinoidea</taxon>
        <taxon>Euechinoidea</taxon>
        <taxon>Echinacea</taxon>
        <taxon>Camarodonta</taxon>
        <taxon>Echinidea</taxon>
        <taxon>Strongylocentrotidae</taxon>
        <taxon>Strongylocentrotus</taxon>
    </lineage>
</organism>
<feature type="chain" id="PRO_0000374059" description="Dual serine/threonine and tyrosine protein kinase">
    <location>
        <begin position="1"/>
        <end position="953"/>
    </location>
</feature>
<feature type="domain" description="Protein kinase" evidence="5">
    <location>
        <begin position="665"/>
        <end position="926"/>
    </location>
</feature>
<feature type="region of interest" description="Disordered" evidence="7">
    <location>
        <begin position="932"/>
        <end position="953"/>
    </location>
</feature>
<feature type="active site" description="Proton acceptor" evidence="4 5 6">
    <location>
        <position position="791"/>
    </location>
</feature>
<feature type="binding site" evidence="4 5">
    <location>
        <begin position="671"/>
        <end position="679"/>
    </location>
    <ligand>
        <name>ATP</name>
        <dbReference type="ChEBI" id="CHEBI:30616"/>
    </ligand>
</feature>
<feature type="binding site" evidence="4 5">
    <location>
        <position position="694"/>
    </location>
    <ligand>
        <name>ATP</name>
        <dbReference type="ChEBI" id="CHEBI:30616"/>
    </ligand>
</feature>
<reference evidence="9" key="1">
    <citation type="journal article" date="2006" name="Biochim. Biophys. Acta">
        <title>Dusty protein kinases: primary structure, gene evolution, tissue specific expression and unique features of the catalytic domain.</title>
        <authorList>
            <person name="Peng J."/>
            <person name="Dong W."/>
            <person name="Chen Y."/>
            <person name="Mo R."/>
            <person name="Cheng J.-F."/>
            <person name="Hui C.-C."/>
            <person name="Mohandas N."/>
            <person name="Huang C.-H."/>
        </authorList>
    </citation>
    <scope>NUCLEOTIDE SEQUENCE [MRNA]</scope>
</reference>
<comment type="function">
    <text evidence="2 4">May act as a positive regulator of ERK phosphorylation downstream of fibroblast growth factor-receptor activation. May induce both caspase-dependent apoptosis and caspase-independent cell death. May play a role in the embryonic development.</text>
</comment>
<comment type="catalytic activity">
    <reaction evidence="1">
        <text>L-seryl-[protein] + ATP = O-phospho-L-seryl-[protein] + ADP + H(+)</text>
        <dbReference type="Rhea" id="RHEA:17989"/>
        <dbReference type="Rhea" id="RHEA-COMP:9863"/>
        <dbReference type="Rhea" id="RHEA-COMP:11604"/>
        <dbReference type="ChEBI" id="CHEBI:15378"/>
        <dbReference type="ChEBI" id="CHEBI:29999"/>
        <dbReference type="ChEBI" id="CHEBI:30616"/>
        <dbReference type="ChEBI" id="CHEBI:83421"/>
        <dbReference type="ChEBI" id="CHEBI:456216"/>
        <dbReference type="EC" id="2.7.12.1"/>
    </reaction>
</comment>
<comment type="catalytic activity">
    <reaction evidence="1">
        <text>L-threonyl-[protein] + ATP = O-phospho-L-threonyl-[protein] + ADP + H(+)</text>
        <dbReference type="Rhea" id="RHEA:46608"/>
        <dbReference type="Rhea" id="RHEA-COMP:11060"/>
        <dbReference type="Rhea" id="RHEA-COMP:11605"/>
        <dbReference type="ChEBI" id="CHEBI:15378"/>
        <dbReference type="ChEBI" id="CHEBI:30013"/>
        <dbReference type="ChEBI" id="CHEBI:30616"/>
        <dbReference type="ChEBI" id="CHEBI:61977"/>
        <dbReference type="ChEBI" id="CHEBI:456216"/>
        <dbReference type="EC" id="2.7.12.1"/>
    </reaction>
</comment>
<comment type="catalytic activity">
    <reaction evidence="1">
        <text>L-tyrosyl-[protein] + ATP = O-phospho-L-tyrosyl-[protein] + ADP + H(+)</text>
        <dbReference type="Rhea" id="RHEA:10596"/>
        <dbReference type="Rhea" id="RHEA-COMP:10136"/>
        <dbReference type="Rhea" id="RHEA-COMP:20101"/>
        <dbReference type="ChEBI" id="CHEBI:15378"/>
        <dbReference type="ChEBI" id="CHEBI:30616"/>
        <dbReference type="ChEBI" id="CHEBI:46858"/>
        <dbReference type="ChEBI" id="CHEBI:61978"/>
        <dbReference type="ChEBI" id="CHEBI:456216"/>
        <dbReference type="EC" id="2.7.12.1"/>
    </reaction>
</comment>
<comment type="subcellular location">
    <subcellularLocation>
        <location evidence="3">Cytoplasm</location>
    </subcellularLocation>
    <subcellularLocation>
        <location evidence="3">Cell membrane</location>
    </subcellularLocation>
    <subcellularLocation>
        <location evidence="3">Apical cell membrane</location>
    </subcellularLocation>
    <subcellularLocation>
        <location evidence="3">Basolateral cell membrane</location>
    </subcellularLocation>
    <subcellularLocation>
        <location evidence="3">Cell junction</location>
    </subcellularLocation>
</comment>
<comment type="similarity">
    <text evidence="5">Belongs to the protein kinase superfamily. Ser/Thr protein kinase family.</text>
</comment>
<gene>
    <name evidence="4" type="primary">DSTYK</name>
    <name evidence="4" type="synonym">RIPK5</name>
</gene>
<name>DUSTY_STRPU</name>
<dbReference type="EC" id="2.7.12.1" evidence="1"/>
<dbReference type="EMBL" id="DQ419946">
    <property type="protein sequence ID" value="ABD77594.1"/>
    <property type="molecule type" value="mRNA"/>
</dbReference>
<dbReference type="RefSeq" id="NP_001091920.1">
    <property type="nucleotide sequence ID" value="NM_001098450.1"/>
</dbReference>
<dbReference type="SMR" id="A2CI35"/>
<dbReference type="FunCoup" id="A2CI35">
    <property type="interactions" value="1269"/>
</dbReference>
<dbReference type="STRING" id="7668.A2CI35"/>
<dbReference type="EnsemblMetazoa" id="NM_001098450">
    <property type="protein sequence ID" value="NP_001091920"/>
    <property type="gene ID" value="LOC581730"/>
</dbReference>
<dbReference type="GeneID" id="581730"/>
<dbReference type="KEGG" id="spu:581730"/>
<dbReference type="CTD" id="25778"/>
<dbReference type="eggNOG" id="KOG0192">
    <property type="taxonomic scope" value="Eukaryota"/>
</dbReference>
<dbReference type="HOGENOM" id="CLU_014116_0_0_1"/>
<dbReference type="InParanoid" id="A2CI35"/>
<dbReference type="OMA" id="NGLWRWI"/>
<dbReference type="OrthoDB" id="122279at2759"/>
<dbReference type="Proteomes" id="UP000007110">
    <property type="component" value="Unassembled WGS sequence"/>
</dbReference>
<dbReference type="GO" id="GO:0070161">
    <property type="term" value="C:anchoring junction"/>
    <property type="evidence" value="ECO:0007669"/>
    <property type="project" value="UniProtKB-SubCell"/>
</dbReference>
<dbReference type="GO" id="GO:0016324">
    <property type="term" value="C:apical plasma membrane"/>
    <property type="evidence" value="ECO:0000250"/>
    <property type="project" value="UniProtKB"/>
</dbReference>
<dbReference type="GO" id="GO:0016323">
    <property type="term" value="C:basolateral plasma membrane"/>
    <property type="evidence" value="ECO:0000250"/>
    <property type="project" value="UniProtKB"/>
</dbReference>
<dbReference type="GO" id="GO:0005737">
    <property type="term" value="C:cytoplasm"/>
    <property type="evidence" value="ECO:0000250"/>
    <property type="project" value="UniProtKB"/>
</dbReference>
<dbReference type="GO" id="GO:0005524">
    <property type="term" value="F:ATP binding"/>
    <property type="evidence" value="ECO:0007669"/>
    <property type="project" value="UniProtKB-KW"/>
</dbReference>
<dbReference type="GO" id="GO:0106310">
    <property type="term" value="F:protein serine kinase activity"/>
    <property type="evidence" value="ECO:0007669"/>
    <property type="project" value="RHEA"/>
</dbReference>
<dbReference type="GO" id="GO:0004674">
    <property type="term" value="F:protein serine/threonine kinase activity"/>
    <property type="evidence" value="ECO:0007669"/>
    <property type="project" value="UniProtKB-KW"/>
</dbReference>
<dbReference type="GO" id="GO:0004712">
    <property type="term" value="F:protein serine/threonine/tyrosine kinase activity"/>
    <property type="evidence" value="ECO:0007669"/>
    <property type="project" value="UniProtKB-EC"/>
</dbReference>
<dbReference type="GO" id="GO:0004713">
    <property type="term" value="F:protein tyrosine kinase activity"/>
    <property type="evidence" value="ECO:0007669"/>
    <property type="project" value="UniProtKB-KW"/>
</dbReference>
<dbReference type="GO" id="GO:0044344">
    <property type="term" value="P:cellular response to fibroblast growth factor stimulus"/>
    <property type="evidence" value="ECO:0000318"/>
    <property type="project" value="GO_Central"/>
</dbReference>
<dbReference type="GO" id="GO:0048568">
    <property type="term" value="P:embryonic organ development"/>
    <property type="evidence" value="ECO:0000250"/>
    <property type="project" value="UniProtKB"/>
</dbReference>
<dbReference type="GO" id="GO:0043066">
    <property type="term" value="P:negative regulation of apoptotic process"/>
    <property type="evidence" value="ECO:0000318"/>
    <property type="project" value="GO_Central"/>
</dbReference>
<dbReference type="GO" id="GO:0070374">
    <property type="term" value="P:positive regulation of ERK1 and ERK2 cascade"/>
    <property type="evidence" value="ECO:0000318"/>
    <property type="project" value="GO_Central"/>
</dbReference>
<dbReference type="GO" id="GO:0045743">
    <property type="term" value="P:positive regulation of fibroblast growth factor receptor signaling pathway"/>
    <property type="evidence" value="ECO:0000318"/>
    <property type="project" value="GO_Central"/>
</dbReference>
<dbReference type="CDD" id="cd13975">
    <property type="entry name" value="PKc_Dusty"/>
    <property type="match status" value="1"/>
</dbReference>
<dbReference type="Gene3D" id="1.10.510.10">
    <property type="entry name" value="Transferase(Phosphotransferase) domain 1"/>
    <property type="match status" value="1"/>
</dbReference>
<dbReference type="InterPro" id="IPR051302">
    <property type="entry name" value="Dual_SerThr-Tyr_Kinase"/>
</dbReference>
<dbReference type="InterPro" id="IPR011009">
    <property type="entry name" value="Kinase-like_dom_sf"/>
</dbReference>
<dbReference type="InterPro" id="IPR000719">
    <property type="entry name" value="Prot_kinase_dom"/>
</dbReference>
<dbReference type="InterPro" id="IPR017441">
    <property type="entry name" value="Protein_kinase_ATP_BS"/>
</dbReference>
<dbReference type="InterPro" id="IPR008271">
    <property type="entry name" value="Ser/Thr_kinase_AS"/>
</dbReference>
<dbReference type="PANTHER" id="PTHR46392">
    <property type="entry name" value="DUAL SERINE/THREONINE AND TYROSINE PROTEIN KINASE"/>
    <property type="match status" value="1"/>
</dbReference>
<dbReference type="PANTHER" id="PTHR46392:SF1">
    <property type="entry name" value="DUAL SERINE_THREONINE AND TYROSINE PROTEIN KINASE"/>
    <property type="match status" value="1"/>
</dbReference>
<dbReference type="Pfam" id="PF00069">
    <property type="entry name" value="Pkinase"/>
    <property type="match status" value="1"/>
</dbReference>
<dbReference type="SMART" id="SM00220">
    <property type="entry name" value="S_TKc"/>
    <property type="match status" value="1"/>
</dbReference>
<dbReference type="SUPFAM" id="SSF56112">
    <property type="entry name" value="Protein kinase-like (PK-like)"/>
    <property type="match status" value="1"/>
</dbReference>
<dbReference type="PROSITE" id="PS00107">
    <property type="entry name" value="PROTEIN_KINASE_ATP"/>
    <property type="match status" value="1"/>
</dbReference>
<dbReference type="PROSITE" id="PS50011">
    <property type="entry name" value="PROTEIN_KINASE_DOM"/>
    <property type="match status" value="1"/>
</dbReference>
<dbReference type="PROSITE" id="PS00108">
    <property type="entry name" value="PROTEIN_KINASE_ST"/>
    <property type="match status" value="1"/>
</dbReference>
<proteinExistence type="evidence at transcript level"/>
<keyword id="KW-0067">ATP-binding</keyword>
<keyword id="KW-0965">Cell junction</keyword>
<keyword id="KW-1003">Cell membrane</keyword>
<keyword id="KW-0963">Cytoplasm</keyword>
<keyword id="KW-0217">Developmental protein</keyword>
<keyword id="KW-0418">Kinase</keyword>
<keyword id="KW-0472">Membrane</keyword>
<keyword id="KW-0547">Nucleotide-binding</keyword>
<keyword id="KW-1185">Reference proteome</keyword>
<keyword id="KW-0723">Serine/threonine-protein kinase</keyword>
<keyword id="KW-0808">Transferase</keyword>
<keyword id="KW-0829">Tyrosine-protein kinase</keyword>
<sequence length="953" mass="108380">MSSRRLGSSRARGRDLAHEVKHFGGLTKHLKKIIFDSNNCLTELKTSDHFEEEVISTLVLPPVADEIVGKVTKNPPALVIFGQTYTSKATLVNKIFREDLFQIVDDSDNNKTWRAVHLKYGSQRNTRLTLTNSFELLNEEPGSPVMRNSWTGIPRVEMLVKEEHQKDACMLSATTEATLNHPLLQCKLQILVTPHNCPGISISQAYNVCTHNVLPVLLYCFDKDQLSEENLRDLQELQNCAGTLPILFVDCREPSEPLVAHRERRLVEDAHEDFDDDSAYDTDERIEGERERHNGLDARLRRRCRPTPNDRPSVIDQLSRAGFISSPEENGRMRGVLDVFTIVNQVEDLHNSAAIVQFIRRSLQYYLIRCCTAMHDLHQHCMNLFITTAFDMQRDILVTPKRIEYARQRENELFDSLKDLTNQKQEQLRSLIQSTVADMTEDLLEQAGNYRFTDLEVSQEGKIQSQKDIKRCTEQIQDLVLARLNACVVEKLIGSVELLRESFLGTLQRCLASLEKIDGDLETSTTVALRQILNAAYQVEVSVRTSSSVVRIIWERMKEFFQSIKPFKTPTRVDTEWKRKVAQTMINNLDESKLAKSICSQFRSRLNNSHESFSTSLRQLEQKHSGRLEKTEEQRMKVRKVYAPRLARLALESTSLRDMVLYGMPKLEREIGRGQYGVVYSCRSWGGVTHCAVKSVVPPDDKHWNDLAMEFHYTRSIAEHDRIVAVIGSVIDHGYGGMGCSPAVLLLMERMQRDLHTAIKANMELPERLHVALDVAEGVRYLHSLGLVHRDIKLKNVLLDKHDRGKITDLGFCKPEAMMSGSIVGTPIHMAPELFSGKYDNSVDTYAFGILLWYVCAGHVKLPQAFEQCANKDHLWTSVKKGVRPERLRPQFDDASWNLMKSSWAGEPSERPLLGEVQSKLQDIYTKALAKREAEGGGGGGAKEQQNLKSDTL</sequence>
<protein>
    <recommendedName>
        <fullName evidence="8">Dual serine/threonine and tyrosine protein kinase</fullName>
        <ecNumber evidence="1">2.7.12.1</ecNumber>
    </recommendedName>
    <alternativeName>
        <fullName evidence="8">Dusty protein kinase</fullName>
        <shortName evidence="8">Dusty PK</shortName>
    </alternativeName>
    <alternativeName>
        <fullName evidence="4">Receptor-interacting serine/threonine-protein kinase 5</fullName>
    </alternativeName>
</protein>
<accession>A2CI35</accession>
<evidence type="ECO:0000250" key="1">
    <source>
        <dbReference type="UniProtKB" id="P16879"/>
    </source>
</evidence>
<evidence type="ECO:0000250" key="2">
    <source>
        <dbReference type="UniProtKB" id="Q4VSN1"/>
    </source>
</evidence>
<evidence type="ECO:0000250" key="3">
    <source>
        <dbReference type="UniProtKB" id="Q6XUX1"/>
    </source>
</evidence>
<evidence type="ECO:0000250" key="4">
    <source>
        <dbReference type="UniProtKB" id="Q6XUX3"/>
    </source>
</evidence>
<evidence type="ECO:0000255" key="5">
    <source>
        <dbReference type="PROSITE-ProRule" id="PRU00159"/>
    </source>
</evidence>
<evidence type="ECO:0000255" key="6">
    <source>
        <dbReference type="PROSITE-ProRule" id="PRU10027"/>
    </source>
</evidence>
<evidence type="ECO:0000256" key="7">
    <source>
        <dbReference type="SAM" id="MobiDB-lite"/>
    </source>
</evidence>
<evidence type="ECO:0000303" key="8">
    <source>
    </source>
</evidence>
<evidence type="ECO:0000312" key="9">
    <source>
        <dbReference type="EMBL" id="ABD77594.1"/>
    </source>
</evidence>